<evidence type="ECO:0000255" key="1">
    <source>
        <dbReference type="PROSITE-ProRule" id="PRU00395"/>
    </source>
</evidence>
<evidence type="ECO:0000269" key="2">
    <source>
    </source>
</evidence>
<evidence type="ECO:0000303" key="3">
    <source>
    </source>
</evidence>
<evidence type="ECO:0000305" key="4"/>
<evidence type="ECO:0000305" key="5">
    <source>
    </source>
</evidence>
<proteinExistence type="evidence at protein level"/>
<sequence>GVFCGEPCIKASCSIPGCECIAGLCYKN</sequence>
<accession>C0HL16</accession>
<comment type="function">
    <text evidence="1">Probably participates in a plant defense mechanism.</text>
</comment>
<comment type="domain">
    <text evidence="4">The presence of a 'disulfide through disulfide knot' structurally defines this protein as a knottin.</text>
</comment>
<comment type="PTM">
    <text evidence="1 2">This is a cyclic peptide.</text>
</comment>
<comment type="PTM">
    <text evidence="2">Contains 3 disulfide bonds.</text>
</comment>
<comment type="mass spectrometry"/>
<comment type="similarity">
    <text evidence="5">Belongs to the cyclotide family. Bracelet subfamily.</text>
</comment>
<comment type="caution">
    <text evidence="1">This peptide is cyclic. The start position was chosen by similarity to Oak1 (kalata B1) for which the DNA sequence is known.</text>
</comment>
<reference evidence="4" key="1">
    <citation type="journal article" date="2017" name="J. Nat. Prod.">
        <title>Cyclotides from the Indian Medicinal Plant Viola odorata (Banafsha): Identification and Characterization.</title>
        <authorList>
            <person name="Narayani M."/>
            <person name="Chadha A."/>
            <person name="Srivastava S."/>
        </authorList>
    </citation>
    <scope>PROTEIN SEQUENCE</scope>
    <scope>MASS SPECTROMETRY</scope>
    <scope>IDENTIFICATION BY MASS SPECTROMETRY</scope>
    <scope>PRESENCE OF DISULFIDE BONDS</scope>
    <scope>CYCLIZATION</scope>
</reference>
<keyword id="KW-0903">Direct protein sequencing</keyword>
<keyword id="KW-1015">Disulfide bond</keyword>
<keyword id="KW-0960">Knottin</keyword>
<keyword id="KW-0611">Plant defense</keyword>
<dbReference type="SMR" id="C0HL16"/>
<dbReference type="GO" id="GO:0006952">
    <property type="term" value="P:defense response"/>
    <property type="evidence" value="ECO:0007669"/>
    <property type="project" value="UniProtKB-KW"/>
</dbReference>
<dbReference type="InterPro" id="IPR005535">
    <property type="entry name" value="Cyclotide"/>
</dbReference>
<dbReference type="InterPro" id="IPR036146">
    <property type="entry name" value="Cyclotide_sf"/>
</dbReference>
<dbReference type="Pfam" id="PF03784">
    <property type="entry name" value="Cyclotide"/>
    <property type="match status" value="1"/>
</dbReference>
<dbReference type="SUPFAM" id="SSF57038">
    <property type="entry name" value="Cyclotides"/>
    <property type="match status" value="1"/>
</dbReference>
<name>CYV3_VIOOD</name>
<organism evidence="3">
    <name type="scientific">Viola odorata</name>
    <name type="common">Sweet violet</name>
    <dbReference type="NCBI Taxonomy" id="97441"/>
    <lineage>
        <taxon>Eukaryota</taxon>
        <taxon>Viridiplantae</taxon>
        <taxon>Streptophyta</taxon>
        <taxon>Embryophyta</taxon>
        <taxon>Tracheophyta</taxon>
        <taxon>Spermatophyta</taxon>
        <taxon>Magnoliopsida</taxon>
        <taxon>eudicotyledons</taxon>
        <taxon>Gunneridae</taxon>
        <taxon>Pentapetalae</taxon>
        <taxon>rosids</taxon>
        <taxon>fabids</taxon>
        <taxon>Malpighiales</taxon>
        <taxon>Violaceae</taxon>
        <taxon>Viola</taxon>
        <taxon>Viola subgen. Viola</taxon>
        <taxon>Viola sect. Viola</taxon>
        <taxon>Viola subsect. Viola</taxon>
    </lineage>
</organism>
<protein>
    <recommendedName>
        <fullName evidence="3">Cyclotide vodo I3</fullName>
    </recommendedName>
</protein>
<feature type="peptide" id="PRO_0000441791" description="Cyclotide vodo I3" evidence="2">
    <location>
        <begin position="1"/>
        <end position="28"/>
    </location>
</feature>
<feature type="disulfide bond" evidence="1">
    <location>
        <begin position="4"/>
        <end position="18"/>
    </location>
</feature>
<feature type="disulfide bond" evidence="1">
    <location>
        <begin position="8"/>
        <end position="20"/>
    </location>
</feature>
<feature type="disulfide bond" evidence="1">
    <location>
        <begin position="13"/>
        <end position="25"/>
    </location>
</feature>